<protein>
    <recommendedName>
        <fullName evidence="1">Proline--tRNA ligase</fullName>
        <ecNumber evidence="1">6.1.1.15</ecNumber>
    </recommendedName>
    <alternativeName>
        <fullName evidence="1">Prolyl-tRNA synthetase</fullName>
        <shortName evidence="1">ProRS</shortName>
    </alternativeName>
</protein>
<accession>A1U1F0</accession>
<organism>
    <name type="scientific">Marinobacter nauticus (strain ATCC 700491 / DSM 11845 / VT8)</name>
    <name type="common">Marinobacter aquaeolei</name>
    <dbReference type="NCBI Taxonomy" id="351348"/>
    <lineage>
        <taxon>Bacteria</taxon>
        <taxon>Pseudomonadati</taxon>
        <taxon>Pseudomonadota</taxon>
        <taxon>Gammaproteobacteria</taxon>
        <taxon>Pseudomonadales</taxon>
        <taxon>Marinobacteraceae</taxon>
        <taxon>Marinobacter</taxon>
    </lineage>
</organism>
<gene>
    <name evidence="1" type="primary">proS</name>
    <name type="ordered locus">Maqu_1735</name>
</gene>
<reference key="1">
    <citation type="journal article" date="2011" name="Appl. Environ. Microbiol.">
        <title>Genomic potential of Marinobacter aquaeolei, a biogeochemical 'opportunitroph'.</title>
        <authorList>
            <person name="Singer E."/>
            <person name="Webb E.A."/>
            <person name="Nelson W.C."/>
            <person name="Heidelberg J.F."/>
            <person name="Ivanova N."/>
            <person name="Pati A."/>
            <person name="Edwards K.J."/>
        </authorList>
    </citation>
    <scope>NUCLEOTIDE SEQUENCE [LARGE SCALE GENOMIC DNA]</scope>
    <source>
        <strain>ATCC 700491 / DSM 11845 / VT8</strain>
    </source>
</reference>
<dbReference type="EC" id="6.1.1.15" evidence="1"/>
<dbReference type="EMBL" id="CP000514">
    <property type="protein sequence ID" value="ABM18819.1"/>
    <property type="molecule type" value="Genomic_DNA"/>
</dbReference>
<dbReference type="RefSeq" id="WP_011785218.1">
    <property type="nucleotide sequence ID" value="NC_008740.1"/>
</dbReference>
<dbReference type="SMR" id="A1U1F0"/>
<dbReference type="STRING" id="351348.Maqu_1735"/>
<dbReference type="KEGG" id="maq:Maqu_1735"/>
<dbReference type="eggNOG" id="COG0442">
    <property type="taxonomic scope" value="Bacteria"/>
</dbReference>
<dbReference type="HOGENOM" id="CLU_016739_0_0_6"/>
<dbReference type="OrthoDB" id="9809052at2"/>
<dbReference type="Proteomes" id="UP000000998">
    <property type="component" value="Chromosome"/>
</dbReference>
<dbReference type="GO" id="GO:0005829">
    <property type="term" value="C:cytosol"/>
    <property type="evidence" value="ECO:0007669"/>
    <property type="project" value="TreeGrafter"/>
</dbReference>
<dbReference type="GO" id="GO:0002161">
    <property type="term" value="F:aminoacyl-tRNA deacylase activity"/>
    <property type="evidence" value="ECO:0007669"/>
    <property type="project" value="InterPro"/>
</dbReference>
<dbReference type="GO" id="GO:0005524">
    <property type="term" value="F:ATP binding"/>
    <property type="evidence" value="ECO:0007669"/>
    <property type="project" value="UniProtKB-UniRule"/>
</dbReference>
<dbReference type="GO" id="GO:0004827">
    <property type="term" value="F:proline-tRNA ligase activity"/>
    <property type="evidence" value="ECO:0007669"/>
    <property type="project" value="UniProtKB-UniRule"/>
</dbReference>
<dbReference type="GO" id="GO:0006433">
    <property type="term" value="P:prolyl-tRNA aminoacylation"/>
    <property type="evidence" value="ECO:0007669"/>
    <property type="project" value="UniProtKB-UniRule"/>
</dbReference>
<dbReference type="CDD" id="cd04334">
    <property type="entry name" value="ProRS-INS"/>
    <property type="match status" value="1"/>
</dbReference>
<dbReference type="CDD" id="cd00861">
    <property type="entry name" value="ProRS_anticodon_short"/>
    <property type="match status" value="1"/>
</dbReference>
<dbReference type="CDD" id="cd00779">
    <property type="entry name" value="ProRS_core_prok"/>
    <property type="match status" value="1"/>
</dbReference>
<dbReference type="FunFam" id="3.30.930.10:FF:000043">
    <property type="entry name" value="Proline--tRNA ligase"/>
    <property type="match status" value="1"/>
</dbReference>
<dbReference type="FunFam" id="3.30.930.10:FF:000097">
    <property type="entry name" value="Proline--tRNA ligase"/>
    <property type="match status" value="1"/>
</dbReference>
<dbReference type="Gene3D" id="3.40.50.800">
    <property type="entry name" value="Anticodon-binding domain"/>
    <property type="match status" value="1"/>
</dbReference>
<dbReference type="Gene3D" id="3.30.930.10">
    <property type="entry name" value="Bira Bifunctional Protein, Domain 2"/>
    <property type="match status" value="2"/>
</dbReference>
<dbReference type="Gene3D" id="3.90.960.10">
    <property type="entry name" value="YbaK/aminoacyl-tRNA synthetase-associated domain"/>
    <property type="match status" value="1"/>
</dbReference>
<dbReference type="HAMAP" id="MF_01569">
    <property type="entry name" value="Pro_tRNA_synth_type1"/>
    <property type="match status" value="1"/>
</dbReference>
<dbReference type="InterPro" id="IPR002314">
    <property type="entry name" value="aa-tRNA-synt_IIb"/>
</dbReference>
<dbReference type="InterPro" id="IPR006195">
    <property type="entry name" value="aa-tRNA-synth_II"/>
</dbReference>
<dbReference type="InterPro" id="IPR045864">
    <property type="entry name" value="aa-tRNA-synth_II/BPL/LPL"/>
</dbReference>
<dbReference type="InterPro" id="IPR004154">
    <property type="entry name" value="Anticodon-bd"/>
</dbReference>
<dbReference type="InterPro" id="IPR036621">
    <property type="entry name" value="Anticodon-bd_dom_sf"/>
</dbReference>
<dbReference type="InterPro" id="IPR002316">
    <property type="entry name" value="Pro-tRNA-ligase_IIa"/>
</dbReference>
<dbReference type="InterPro" id="IPR004500">
    <property type="entry name" value="Pro-tRNA-synth_IIa_bac-type"/>
</dbReference>
<dbReference type="InterPro" id="IPR023717">
    <property type="entry name" value="Pro-tRNA-Synthase_IIa_type1"/>
</dbReference>
<dbReference type="InterPro" id="IPR050062">
    <property type="entry name" value="Pro-tRNA_synthetase"/>
</dbReference>
<dbReference type="InterPro" id="IPR044140">
    <property type="entry name" value="ProRS_anticodon_short"/>
</dbReference>
<dbReference type="InterPro" id="IPR033730">
    <property type="entry name" value="ProRS_core_prok"/>
</dbReference>
<dbReference type="InterPro" id="IPR036754">
    <property type="entry name" value="YbaK/aa-tRNA-synt-asso_dom_sf"/>
</dbReference>
<dbReference type="InterPro" id="IPR007214">
    <property type="entry name" value="YbaK/aa-tRNA-synth-assoc-dom"/>
</dbReference>
<dbReference type="NCBIfam" id="NF006625">
    <property type="entry name" value="PRK09194.1"/>
    <property type="match status" value="1"/>
</dbReference>
<dbReference type="NCBIfam" id="TIGR00409">
    <property type="entry name" value="proS_fam_II"/>
    <property type="match status" value="1"/>
</dbReference>
<dbReference type="PANTHER" id="PTHR42753">
    <property type="entry name" value="MITOCHONDRIAL RIBOSOME PROTEIN L39/PROLYL-TRNA LIGASE FAMILY MEMBER"/>
    <property type="match status" value="1"/>
</dbReference>
<dbReference type="PANTHER" id="PTHR42753:SF2">
    <property type="entry name" value="PROLINE--TRNA LIGASE"/>
    <property type="match status" value="1"/>
</dbReference>
<dbReference type="Pfam" id="PF03129">
    <property type="entry name" value="HGTP_anticodon"/>
    <property type="match status" value="1"/>
</dbReference>
<dbReference type="Pfam" id="PF00587">
    <property type="entry name" value="tRNA-synt_2b"/>
    <property type="match status" value="1"/>
</dbReference>
<dbReference type="Pfam" id="PF04073">
    <property type="entry name" value="tRNA_edit"/>
    <property type="match status" value="1"/>
</dbReference>
<dbReference type="PIRSF" id="PIRSF001535">
    <property type="entry name" value="ProRS_1"/>
    <property type="match status" value="1"/>
</dbReference>
<dbReference type="PRINTS" id="PR01046">
    <property type="entry name" value="TRNASYNTHPRO"/>
</dbReference>
<dbReference type="SUPFAM" id="SSF52954">
    <property type="entry name" value="Class II aaRS ABD-related"/>
    <property type="match status" value="1"/>
</dbReference>
<dbReference type="SUPFAM" id="SSF55681">
    <property type="entry name" value="Class II aaRS and biotin synthetases"/>
    <property type="match status" value="1"/>
</dbReference>
<dbReference type="SUPFAM" id="SSF55826">
    <property type="entry name" value="YbaK/ProRS associated domain"/>
    <property type="match status" value="1"/>
</dbReference>
<dbReference type="PROSITE" id="PS50862">
    <property type="entry name" value="AA_TRNA_LIGASE_II"/>
    <property type="match status" value="1"/>
</dbReference>
<feature type="chain" id="PRO_0000288346" description="Proline--tRNA ligase">
    <location>
        <begin position="1"/>
        <end position="577"/>
    </location>
</feature>
<keyword id="KW-0030">Aminoacyl-tRNA synthetase</keyword>
<keyword id="KW-0067">ATP-binding</keyword>
<keyword id="KW-0963">Cytoplasm</keyword>
<keyword id="KW-0436">Ligase</keyword>
<keyword id="KW-0547">Nucleotide-binding</keyword>
<keyword id="KW-0648">Protein biosynthesis</keyword>
<evidence type="ECO:0000255" key="1">
    <source>
        <dbReference type="HAMAP-Rule" id="MF_01569"/>
    </source>
</evidence>
<proteinExistence type="inferred from homology"/>
<name>SYP_MARN8</name>
<comment type="function">
    <text evidence="1">Catalyzes the attachment of proline to tRNA(Pro) in a two-step reaction: proline is first activated by ATP to form Pro-AMP and then transferred to the acceptor end of tRNA(Pro). As ProRS can inadvertently accommodate and process non-cognate amino acids such as alanine and cysteine, to avoid such errors it has two additional distinct editing activities against alanine. One activity is designated as 'pretransfer' editing and involves the tRNA(Pro)-independent hydrolysis of activated Ala-AMP. The other activity is designated 'posttransfer' editing and involves deacylation of mischarged Ala-tRNA(Pro). The misacylated Cys-tRNA(Pro) is not edited by ProRS.</text>
</comment>
<comment type="catalytic activity">
    <reaction evidence="1">
        <text>tRNA(Pro) + L-proline + ATP = L-prolyl-tRNA(Pro) + AMP + diphosphate</text>
        <dbReference type="Rhea" id="RHEA:14305"/>
        <dbReference type="Rhea" id="RHEA-COMP:9700"/>
        <dbReference type="Rhea" id="RHEA-COMP:9702"/>
        <dbReference type="ChEBI" id="CHEBI:30616"/>
        <dbReference type="ChEBI" id="CHEBI:33019"/>
        <dbReference type="ChEBI" id="CHEBI:60039"/>
        <dbReference type="ChEBI" id="CHEBI:78442"/>
        <dbReference type="ChEBI" id="CHEBI:78532"/>
        <dbReference type="ChEBI" id="CHEBI:456215"/>
        <dbReference type="EC" id="6.1.1.15"/>
    </reaction>
</comment>
<comment type="subunit">
    <text evidence="1">Homodimer.</text>
</comment>
<comment type="subcellular location">
    <subcellularLocation>
        <location evidence="1">Cytoplasm</location>
    </subcellularLocation>
</comment>
<comment type="domain">
    <text evidence="1">Consists of three domains: the N-terminal catalytic domain, the editing domain and the C-terminal anticodon-binding domain.</text>
</comment>
<comment type="similarity">
    <text evidence="1">Belongs to the class-II aminoacyl-tRNA synthetase family. ProS type 1 subfamily.</text>
</comment>
<sequence length="577" mass="63785">MRASRYLIATQKETPSDAEIISHQLMLRAGMIRKLAAGLYTWLPLGLRTLRKVERIVREEMDKSGAQEVLMPAVQPAELWQESGRWEQYGGELLRLNDRHGRDFCFGPTHEEVITDLIRNELKSYKELPANFYQIQTKFRDERRPRFGVMRAREFIMKDAYSFHLNAESLDETYKVMHQTYCNIFDRLGLDYRPVQADSGSIGGSSSHEFHVLASSGEDAIVFSTSGDYAANIEKAEAVAPAGERPAPGEELKEVHTPGQRTIDAVSQFLGMPAERSVKTLLVKAEADENGESGLVALILRGDHTLNEIKAENLPGIAEPLTMATDEEIEKAIGCKPGSIGPVKLPVPVIVDRSAAHLADFVCGANKDDYHLTGVNWGRDAEISRVEDLRNVVEGDASPDGNGTLEIRRGIEVGHIFKLGNKYSKAMNASVLDEHGKTSIMEMGCYGIGVSRIVAASIEQNHDEKGIIWPDAIAPFEVAIVTLNGHKSPVVAEAGDKLYEQLRQAGYDVLLDDRNERPGVKFADIELIGIPHRFVVSERGLSAGTLEYKGRRDEEKQDIPVDEALSFLVKASPKGGL</sequence>